<organismHost>
    <name type="scientific">Homo sapiens</name>
    <name type="common">Human</name>
    <dbReference type="NCBI Taxonomy" id="9606"/>
</organismHost>
<protein>
    <recommendedName>
        <fullName>Agnoprotein</fullName>
    </recommendedName>
    <alternativeName>
        <fullName>Agno</fullName>
    </alternativeName>
</protein>
<keyword id="KW-0024">Alternative initiation</keyword>
<keyword id="KW-0025">Alternative splicing</keyword>
<keyword id="KW-1032">Host cell membrane</keyword>
<keyword id="KW-1035">Host cytoplasm</keyword>
<keyword id="KW-1038">Host endoplasmic reticulum</keyword>
<keyword id="KW-1043">Host membrane</keyword>
<keyword id="KW-1048">Host nucleus</keyword>
<keyword id="KW-0945">Host-virus interaction</keyword>
<keyword id="KW-0407">Ion channel</keyword>
<keyword id="KW-0406">Ion transport</keyword>
<keyword id="KW-0472">Membrane</keyword>
<keyword id="KW-0597">Phosphoprotein</keyword>
<keyword id="KW-0735">Signal-anchor</keyword>
<keyword id="KW-0812">Transmembrane</keyword>
<keyword id="KW-1133">Transmembrane helix</keyword>
<keyword id="KW-0813">Transport</keyword>
<keyword id="KW-1182">Viral ion channel</keyword>
<dbReference type="EMBL" id="M23122">
    <property type="protein sequence ID" value="AAA46879.1"/>
    <property type="molecule type" value="Genomic_DNA"/>
</dbReference>
<dbReference type="PIR" id="C33278">
    <property type="entry name" value="DNVPAS"/>
</dbReference>
<dbReference type="SMR" id="P14998"/>
<dbReference type="Proteomes" id="UP000008166">
    <property type="component" value="Genome"/>
</dbReference>
<dbReference type="GO" id="GO:0044200">
    <property type="term" value="C:host cell nuclear membrane"/>
    <property type="evidence" value="ECO:0007669"/>
    <property type="project" value="UniProtKB-SubCell"/>
</dbReference>
<dbReference type="GO" id="GO:0020002">
    <property type="term" value="C:host cell plasma membrane"/>
    <property type="evidence" value="ECO:0007669"/>
    <property type="project" value="UniProtKB-SubCell"/>
</dbReference>
<dbReference type="GO" id="GO:0044169">
    <property type="term" value="C:host cell rough endoplasmic reticulum membrane"/>
    <property type="evidence" value="ECO:0007669"/>
    <property type="project" value="UniProtKB-SubCell"/>
</dbReference>
<dbReference type="GO" id="GO:0016020">
    <property type="term" value="C:membrane"/>
    <property type="evidence" value="ECO:0007669"/>
    <property type="project" value="UniProtKB-KW"/>
</dbReference>
<dbReference type="GO" id="GO:0015267">
    <property type="term" value="F:channel activity"/>
    <property type="evidence" value="ECO:0007669"/>
    <property type="project" value="UniProtKB-KW"/>
</dbReference>
<dbReference type="GO" id="GO:0003677">
    <property type="term" value="F:DNA binding"/>
    <property type="evidence" value="ECO:0007669"/>
    <property type="project" value="InterPro"/>
</dbReference>
<dbReference type="GO" id="GO:0034220">
    <property type="term" value="P:monoatomic ion transmembrane transport"/>
    <property type="evidence" value="ECO:0007669"/>
    <property type="project" value="UniProtKB-KW"/>
</dbReference>
<dbReference type="InterPro" id="IPR002643">
    <property type="entry name" value="Polyoma_agno"/>
</dbReference>
<dbReference type="Pfam" id="PF01736">
    <property type="entry name" value="Polyoma_agno"/>
    <property type="match status" value="1"/>
</dbReference>
<comment type="function">
    <text evidence="1">Alters the structure of the nuclear envelope by interacting with host CBX5 and disrupting CBX5 association with LBR. Involved in the perinuclear-nuclear localization of the capsid protein VP1 during virion assembly and maturation. Plays an important role in the release of progeny virions from infected cells and in viral propagation, probably by acting as a viral ionic channel in the host plasma membrane. Allows influx of extracellular calcium ions in the host cell. May contribute to viral genome transcription and translation of viral late proteins (By similarity).</text>
</comment>
<comment type="subunit">
    <text evidence="1">Homooligomer. Interacts with VP1 (By similarity). Interacts with large T antigen; this interaction may impact upon the activity of T-antigen on the control of viral gene transcription and replication. Interacts with small t antigen. Interacts with host CBX5; this interaction induces the dissociation of CBX5 from LBR, resulting in destabilization of the nuclear envelope (By similarity).</text>
</comment>
<comment type="subcellular location">
    <subcellularLocation>
        <location evidence="3">Host cytoplasm</location>
    </subcellularLocation>
    <subcellularLocation>
        <location evidence="3">Host nucleus membrane</location>
        <topology evidence="3">Single-pass type II membrane protein</topology>
    </subcellularLocation>
    <subcellularLocation>
        <location evidence="3">Host rough endoplasmic reticulum membrane</location>
        <topology evidence="3">Single-pass type II membrane protein</topology>
    </subcellularLocation>
    <subcellularLocation>
        <location evidence="3">Host cell membrane</location>
        <topology evidence="3">Single-pass type II membrane protein</topology>
    </subcellularLocation>
    <text evidence="1">Mostly perinuclear.</text>
</comment>
<comment type="alternative products">
    <event type="alternative splicing"/>
    <event type="alternative initiation"/>
    <isoform>
        <id>P14998-1</id>
        <name>Agno</name>
        <sequence type="displayed"/>
    </isoform>
    <isoform>
        <id>P14997-1</id>
        <name>VP2</name>
        <name>Minor capsid protein VP2</name>
        <sequence type="external"/>
    </isoform>
    <isoform>
        <id>P14997-2</id>
        <name>VP3</name>
        <name>Minor capsid protein VP3</name>
        <sequence type="external"/>
    </isoform>
    <isoform>
        <id>P14997-3</id>
        <name>VP4</name>
        <name>Viroporin VP4</name>
        <sequence type="external"/>
    </isoform>
    <isoform>
        <id>P14996-1</id>
        <name>VP1</name>
        <sequence type="external"/>
    </isoform>
</comment>
<comment type="PTM">
    <text evidence="1">Phosphorylated by host kinase. Phosphorylation segregates agnoprotein in cytoplasm, whereas unphosphorylated agnoprotein migrate to the nucleus (By similarity).</text>
</comment>
<comment type="miscellaneous">
    <molecule>Isoform Agno</molecule>
    <text>Produced by alternative initiation of the late mRNA.</text>
</comment>
<comment type="similarity">
    <text evidence="3">Belongs to the polyomavirus agnoprotein family.</text>
</comment>
<feature type="chain" id="PRO_0000115030" description="Agnoprotein">
    <location>
        <begin position="1"/>
        <end position="74"/>
    </location>
</feature>
<feature type="topological domain" description="Cytoplasmic" evidence="2">
    <location>
        <begin position="1"/>
        <end position="35"/>
    </location>
</feature>
<feature type="transmembrane region" description="Helical; Signal-anchor for type II membrane protein" evidence="2">
    <location>
        <begin position="36"/>
        <end position="52"/>
    </location>
</feature>
<feature type="topological domain" description="Extracellular" evidence="2">
    <location>
        <begin position="53"/>
        <end position="74"/>
    </location>
</feature>
<feature type="modified residue" description="Phosphoserine; by host" evidence="1">
    <location>
        <position position="15"/>
    </location>
</feature>
<feature type="modified residue" description="Phosphoserine; by host" evidence="1">
    <location>
        <position position="19"/>
    </location>
</feature>
<feature type="modified residue" description="Phosphothreonine; by host" evidence="1">
    <location>
        <position position="29"/>
    </location>
</feature>
<reference key="1">
    <citation type="journal article" date="1989" name="J. Virol.">
        <title>Nucleotide sequence of the human polyomavirus AS virus, an antigenic variant of BK virus.</title>
        <authorList>
            <person name="Tavis J.E."/>
            <person name="Walker D.L."/>
            <person name="Gardner S.D."/>
            <person name="Frisque R.J."/>
        </authorList>
    </citation>
    <scope>NUCLEOTIDE SEQUENCE [GENOMIC DNA]</scope>
</reference>
<name>AGNO_POVBA</name>
<evidence type="ECO:0000250" key="1"/>
<evidence type="ECO:0000255" key="2"/>
<evidence type="ECO:0000305" key="3"/>
<proteinExistence type="inferred from homology"/>
<sequence>MFCEPKNLVVLRQLSRQASVKVGKTWTGTKKRAQRIFIFILELLLEFCRGEDSVDGKNKSTTALPAVKDSVKDS</sequence>
<organism>
    <name type="scientific">BK polyomavirus (strain AS)</name>
    <name type="common">BKPyV</name>
    <dbReference type="NCBI Taxonomy" id="10631"/>
    <lineage>
        <taxon>Viruses</taxon>
        <taxon>Monodnaviria</taxon>
        <taxon>Shotokuvirae</taxon>
        <taxon>Cossaviricota</taxon>
        <taxon>Papovaviricetes</taxon>
        <taxon>Sepolyvirales</taxon>
        <taxon>Polyomaviridae</taxon>
        <taxon>Betapolyomavirus</taxon>
        <taxon>BK polyomavirus</taxon>
    </lineage>
</organism>
<accession>P14998</accession>